<protein>
    <recommendedName>
        <fullName evidence="1 6">Heptaprenylglyceryl phosphate synthase</fullName>
        <shortName evidence="1 6">HepGP synthase</shortName>
        <ecNumber evidence="1 3 5">2.5.1.n9</ecNumber>
    </recommendedName>
    <alternativeName>
        <fullName evidence="1 6">Glycerol-1-phosphate heptaprenyltransferase</fullName>
    </alternativeName>
</protein>
<proteinExistence type="evidence at protein level"/>
<accession>O34790</accession>
<sequence>MYDVTEWKHVFKLDPNKDLPDEQLEILCESGTDAVIIGGSDGVTEDNVLRMMSKVRRFLVPCVLEVSAIEAIVPGFDLYFIPSVLNSKNADWIVGMHQKAMKEYGELMSMEEIVAEGYCIANPDCKAAALTEADADLNMDDIVAYARVSELLQLPIFYLEYSGVLGDIEAVKKTKAVLETSTLFYGGGIKDAETAKQYAEHADVIVVGNAVYEDFDRALKTVAAVKGE</sequence>
<comment type="function">
    <text evidence="2 3 5">Prenyltransferase that catalyzes in vivo the transfer of the heptaprenyl moiety of heptaprenyl pyrophosphate (HepPP; 35 carbon atoms) to the C3 hydroxyl of sn-glycerol-1-phosphate (G1P), producing heptaprenylglyceryl phosphate (HepGP). This reaction is an ether-bond-formation step in the biosynthesis of archaea-type G1P-based membrane lipids found in Bacillales. To a much lesser extent, is also able to use geranyl diphosphate (GPP; C10) and geranylgeranyl diphosphate (GGPP; C20) as the prenyl donors, but not farnesyl pyrophosphate (FPP; C15). Cannot use glycerol-3-phosphate (G3P) or 3-phosphoglycerate (3PG) as an acceptor.</text>
</comment>
<comment type="catalytic activity">
    <reaction evidence="1 3 5">
        <text>sn-glycerol 1-phosphate + all-trans-heptaprenyl diphosphate = 3-heptaprenyl-sn-glycero-1-phosphate + diphosphate</text>
        <dbReference type="Rhea" id="RHEA:33495"/>
        <dbReference type="ChEBI" id="CHEBI:33019"/>
        <dbReference type="ChEBI" id="CHEBI:57685"/>
        <dbReference type="ChEBI" id="CHEBI:58206"/>
        <dbReference type="ChEBI" id="CHEBI:64781"/>
        <dbReference type="EC" id="2.5.1.n9"/>
    </reaction>
</comment>
<comment type="cofactor">
    <cofactor evidence="1">
        <name>Mg(2+)</name>
        <dbReference type="ChEBI" id="CHEBI:18420"/>
    </cofactor>
</comment>
<comment type="pathway">
    <text evidence="1 3">Membrane lipid metabolism; glycerophospholipid metabolism.</text>
</comment>
<comment type="subunit">
    <text evidence="1 3 4 5">Homodimer.</text>
</comment>
<comment type="disruption phenotype">
    <text evidence="3">Cells lacking this gene show a cloggy growth and do not produce the dephosphorylated and acetylated derivatives of HepGP.</text>
</comment>
<comment type="miscellaneous">
    <text>The HepGP product, which is the first archaea-type G1P-based ether lipid being identified within the phylogenetic domain of the bacteria, was found to be subsequently dephosphorylated and acetylated in vivo. However, HepG and its acetylated derivatives represent only a minor fraction of the total lipid in B.subtilis.</text>
</comment>
<comment type="similarity">
    <text evidence="1">Belongs to the GGGP/HepGP synthase family. Group I subfamily.</text>
</comment>
<feature type="chain" id="PRO_0000138711" description="Heptaprenylglyceryl phosphate synthase">
    <location>
        <begin position="1"/>
        <end position="228"/>
    </location>
</feature>
<feature type="binding site" evidence="1 4 9 11">
    <location>
        <position position="12"/>
    </location>
    <ligand>
        <name>sn-glycerol 1-phosphate</name>
        <dbReference type="ChEBI" id="CHEBI:57685"/>
    </ligand>
</feature>
<feature type="binding site" evidence="1">
    <location>
        <position position="14"/>
    </location>
    <ligand>
        <name>Mg(2+)</name>
        <dbReference type="ChEBI" id="CHEBI:18420"/>
    </ligand>
</feature>
<feature type="binding site" evidence="1">
    <location>
        <position position="40"/>
    </location>
    <ligand>
        <name>Mg(2+)</name>
        <dbReference type="ChEBI" id="CHEBI:18420"/>
    </ligand>
</feature>
<feature type="binding site" evidence="1 4 9 11">
    <location>
        <begin position="158"/>
        <end position="163"/>
    </location>
    <ligand>
        <name>sn-glycerol 1-phosphate</name>
        <dbReference type="ChEBI" id="CHEBI:57685"/>
    </ligand>
</feature>
<feature type="binding site" evidence="1 4 9 11">
    <location>
        <position position="188"/>
    </location>
    <ligand>
        <name>sn-glycerol 1-phosphate</name>
        <dbReference type="ChEBI" id="CHEBI:57685"/>
    </ligand>
</feature>
<feature type="binding site" evidence="1 4 9 11">
    <location>
        <begin position="208"/>
        <end position="209"/>
    </location>
    <ligand>
        <name>sn-glycerol 1-phosphate</name>
        <dbReference type="ChEBI" id="CHEBI:57685"/>
    </ligand>
</feature>
<feature type="helix" evidence="12">
    <location>
        <begin position="4"/>
        <end position="6"/>
    </location>
</feature>
<feature type="strand" evidence="12">
    <location>
        <begin position="9"/>
        <end position="13"/>
    </location>
</feature>
<feature type="helix" evidence="12">
    <location>
        <begin position="23"/>
        <end position="28"/>
    </location>
</feature>
<feature type="strand" evidence="12">
    <location>
        <begin position="33"/>
        <end position="37"/>
    </location>
</feature>
<feature type="strand" evidence="13">
    <location>
        <begin position="40"/>
        <end position="42"/>
    </location>
</feature>
<feature type="helix" evidence="12">
    <location>
        <begin position="45"/>
        <end position="55"/>
    </location>
</feature>
<feature type="strand" evidence="12">
    <location>
        <begin position="58"/>
        <end position="60"/>
    </location>
</feature>
<feature type="strand" evidence="12">
    <location>
        <begin position="62"/>
        <end position="65"/>
    </location>
</feature>
<feature type="helix" evidence="12">
    <location>
        <begin position="69"/>
        <end position="71"/>
    </location>
</feature>
<feature type="strand" evidence="12">
    <location>
        <begin position="77"/>
        <end position="84"/>
    </location>
</feature>
<feature type="strand" evidence="12">
    <location>
        <begin position="87"/>
        <end position="89"/>
    </location>
</feature>
<feature type="turn" evidence="12">
    <location>
        <begin position="90"/>
        <end position="94"/>
    </location>
</feature>
<feature type="helix" evidence="12">
    <location>
        <begin position="95"/>
        <end position="110"/>
    </location>
</feature>
<feature type="strand" evidence="12">
    <location>
        <begin position="113"/>
        <end position="120"/>
    </location>
</feature>
<feature type="strand" evidence="12">
    <location>
        <begin position="123"/>
        <end position="125"/>
    </location>
</feature>
<feature type="helix" evidence="12">
    <location>
        <begin position="126"/>
        <end position="130"/>
    </location>
</feature>
<feature type="helix" evidence="12">
    <location>
        <begin position="139"/>
        <end position="151"/>
    </location>
</feature>
<feature type="strand" evidence="12">
    <location>
        <begin position="155"/>
        <end position="160"/>
    </location>
</feature>
<feature type="helix" evidence="12">
    <location>
        <begin position="168"/>
        <end position="177"/>
    </location>
</feature>
<feature type="strand" evidence="12">
    <location>
        <begin position="179"/>
        <end position="188"/>
    </location>
</feature>
<feature type="helix" evidence="12">
    <location>
        <begin position="192"/>
        <end position="199"/>
    </location>
</feature>
<feature type="strand" evidence="12">
    <location>
        <begin position="203"/>
        <end position="207"/>
    </location>
</feature>
<feature type="helix" evidence="12">
    <location>
        <begin position="210"/>
        <end position="213"/>
    </location>
</feature>
<feature type="helix" evidence="12">
    <location>
        <begin position="215"/>
        <end position="219"/>
    </location>
</feature>
<feature type="helix" evidence="12">
    <location>
        <begin position="221"/>
        <end position="226"/>
    </location>
</feature>
<organism>
    <name type="scientific">Bacillus subtilis (strain 168)</name>
    <dbReference type="NCBI Taxonomy" id="224308"/>
    <lineage>
        <taxon>Bacteria</taxon>
        <taxon>Bacillati</taxon>
        <taxon>Bacillota</taxon>
        <taxon>Bacilli</taxon>
        <taxon>Bacillales</taxon>
        <taxon>Bacillaceae</taxon>
        <taxon>Bacillus</taxon>
    </lineage>
</organism>
<name>PCRB_BACSU</name>
<gene>
    <name evidence="1" type="primary">pcrB</name>
    <name type="synonym">yerE</name>
    <name type="ordered locus">BSU06600</name>
</gene>
<evidence type="ECO:0000255" key="1">
    <source>
        <dbReference type="HAMAP-Rule" id="MF_00112"/>
    </source>
</evidence>
<evidence type="ECO:0000269" key="2">
    <source>
    </source>
</evidence>
<evidence type="ECO:0000269" key="3">
    <source>
    </source>
</evidence>
<evidence type="ECO:0000269" key="4">
    <source>
    </source>
</evidence>
<evidence type="ECO:0000269" key="5">
    <source>
    </source>
</evidence>
<evidence type="ECO:0000305" key="6"/>
<evidence type="ECO:0007744" key="7">
    <source>
        <dbReference type="PDB" id="1VIZ"/>
    </source>
</evidence>
<evidence type="ECO:0007744" key="8">
    <source>
        <dbReference type="PDB" id="3VZX"/>
    </source>
</evidence>
<evidence type="ECO:0007744" key="9">
    <source>
        <dbReference type="PDB" id="3VZY"/>
    </source>
</evidence>
<evidence type="ECO:0007744" key="10">
    <source>
        <dbReference type="PDB" id="3VZZ"/>
    </source>
</evidence>
<evidence type="ECO:0007744" key="11">
    <source>
        <dbReference type="PDB" id="3W00"/>
    </source>
</evidence>
<evidence type="ECO:0007829" key="12">
    <source>
        <dbReference type="PDB" id="3VZX"/>
    </source>
</evidence>
<evidence type="ECO:0007829" key="13">
    <source>
        <dbReference type="PDB" id="3VZY"/>
    </source>
</evidence>
<keyword id="KW-0002">3D-structure</keyword>
<keyword id="KW-0444">Lipid biosynthesis</keyword>
<keyword id="KW-0443">Lipid metabolism</keyword>
<keyword id="KW-0460">Magnesium</keyword>
<keyword id="KW-0479">Metal-binding</keyword>
<keyword id="KW-0594">Phospholipid biosynthesis</keyword>
<keyword id="KW-1208">Phospholipid metabolism</keyword>
<keyword id="KW-1185">Reference proteome</keyword>
<keyword id="KW-0808">Transferase</keyword>
<reference key="1">
    <citation type="journal article" date="1998" name="Mol. Microbiol.">
        <title>PcrA is an essential DNA helicase of Bacillus subtilis fulfilling functions both in repair and rolling-circle replication.</title>
        <authorList>
            <person name="Petit M.-A."/>
            <person name="Dervyn E."/>
            <person name="Rose M."/>
            <person name="Entian K.-D."/>
            <person name="McGovern S."/>
            <person name="Ehrlich S.D."/>
            <person name="Bruand C."/>
        </authorList>
    </citation>
    <scope>NUCLEOTIDE SEQUENCE [GENOMIC DNA]</scope>
    <source>
        <strain>168</strain>
    </source>
</reference>
<reference key="2">
    <citation type="journal article" date="1997" name="Nature">
        <title>The complete genome sequence of the Gram-positive bacterium Bacillus subtilis.</title>
        <authorList>
            <person name="Kunst F."/>
            <person name="Ogasawara N."/>
            <person name="Moszer I."/>
            <person name="Albertini A.M."/>
            <person name="Alloni G."/>
            <person name="Azevedo V."/>
            <person name="Bertero M.G."/>
            <person name="Bessieres P."/>
            <person name="Bolotin A."/>
            <person name="Borchert S."/>
            <person name="Borriss R."/>
            <person name="Boursier L."/>
            <person name="Brans A."/>
            <person name="Braun M."/>
            <person name="Brignell S.C."/>
            <person name="Bron S."/>
            <person name="Brouillet S."/>
            <person name="Bruschi C.V."/>
            <person name="Caldwell B."/>
            <person name="Capuano V."/>
            <person name="Carter N.M."/>
            <person name="Choi S.-K."/>
            <person name="Codani J.-J."/>
            <person name="Connerton I.F."/>
            <person name="Cummings N.J."/>
            <person name="Daniel R.A."/>
            <person name="Denizot F."/>
            <person name="Devine K.M."/>
            <person name="Duesterhoeft A."/>
            <person name="Ehrlich S.D."/>
            <person name="Emmerson P.T."/>
            <person name="Entian K.-D."/>
            <person name="Errington J."/>
            <person name="Fabret C."/>
            <person name="Ferrari E."/>
            <person name="Foulger D."/>
            <person name="Fritz C."/>
            <person name="Fujita M."/>
            <person name="Fujita Y."/>
            <person name="Fuma S."/>
            <person name="Galizzi A."/>
            <person name="Galleron N."/>
            <person name="Ghim S.-Y."/>
            <person name="Glaser P."/>
            <person name="Goffeau A."/>
            <person name="Golightly E.J."/>
            <person name="Grandi G."/>
            <person name="Guiseppi G."/>
            <person name="Guy B.J."/>
            <person name="Haga K."/>
            <person name="Haiech J."/>
            <person name="Harwood C.R."/>
            <person name="Henaut A."/>
            <person name="Hilbert H."/>
            <person name="Holsappel S."/>
            <person name="Hosono S."/>
            <person name="Hullo M.-F."/>
            <person name="Itaya M."/>
            <person name="Jones L.-M."/>
            <person name="Joris B."/>
            <person name="Karamata D."/>
            <person name="Kasahara Y."/>
            <person name="Klaerr-Blanchard M."/>
            <person name="Klein C."/>
            <person name="Kobayashi Y."/>
            <person name="Koetter P."/>
            <person name="Koningstein G."/>
            <person name="Krogh S."/>
            <person name="Kumano M."/>
            <person name="Kurita K."/>
            <person name="Lapidus A."/>
            <person name="Lardinois S."/>
            <person name="Lauber J."/>
            <person name="Lazarevic V."/>
            <person name="Lee S.-M."/>
            <person name="Levine A."/>
            <person name="Liu H."/>
            <person name="Masuda S."/>
            <person name="Mauel C."/>
            <person name="Medigue C."/>
            <person name="Medina N."/>
            <person name="Mellado R.P."/>
            <person name="Mizuno M."/>
            <person name="Moestl D."/>
            <person name="Nakai S."/>
            <person name="Noback M."/>
            <person name="Noone D."/>
            <person name="O'Reilly M."/>
            <person name="Ogawa K."/>
            <person name="Ogiwara A."/>
            <person name="Oudega B."/>
            <person name="Park S.-H."/>
            <person name="Parro V."/>
            <person name="Pohl T.M."/>
            <person name="Portetelle D."/>
            <person name="Porwollik S."/>
            <person name="Prescott A.M."/>
            <person name="Presecan E."/>
            <person name="Pujic P."/>
            <person name="Purnelle B."/>
            <person name="Rapoport G."/>
            <person name="Rey M."/>
            <person name="Reynolds S."/>
            <person name="Rieger M."/>
            <person name="Rivolta C."/>
            <person name="Rocha E."/>
            <person name="Roche B."/>
            <person name="Rose M."/>
            <person name="Sadaie Y."/>
            <person name="Sato T."/>
            <person name="Scanlan E."/>
            <person name="Schleich S."/>
            <person name="Schroeter R."/>
            <person name="Scoffone F."/>
            <person name="Sekiguchi J."/>
            <person name="Sekowska A."/>
            <person name="Seror S.J."/>
            <person name="Serror P."/>
            <person name="Shin B.-S."/>
            <person name="Soldo B."/>
            <person name="Sorokin A."/>
            <person name="Tacconi E."/>
            <person name="Takagi T."/>
            <person name="Takahashi H."/>
            <person name="Takemaru K."/>
            <person name="Takeuchi M."/>
            <person name="Tamakoshi A."/>
            <person name="Tanaka T."/>
            <person name="Terpstra P."/>
            <person name="Tognoni A."/>
            <person name="Tosato V."/>
            <person name="Uchiyama S."/>
            <person name="Vandenbol M."/>
            <person name="Vannier F."/>
            <person name="Vassarotti A."/>
            <person name="Viari A."/>
            <person name="Wambutt R."/>
            <person name="Wedler E."/>
            <person name="Wedler H."/>
            <person name="Weitzenegger T."/>
            <person name="Winters P."/>
            <person name="Wipat A."/>
            <person name="Yamamoto H."/>
            <person name="Yamane K."/>
            <person name="Yasumoto K."/>
            <person name="Yata K."/>
            <person name="Yoshida K."/>
            <person name="Yoshikawa H.-F."/>
            <person name="Zumstein E."/>
            <person name="Yoshikawa H."/>
            <person name="Danchin A."/>
        </authorList>
    </citation>
    <scope>NUCLEOTIDE SEQUENCE [LARGE SCALE GENOMIC DNA]</scope>
    <source>
        <strain>168</strain>
    </source>
</reference>
<reference key="3">
    <citation type="journal article" date="2008" name="Biochemistry">
        <title>Identification and characterization of a bacterial glycerol-1-phosphate dehydrogenase: Ni(2+)-dependent AraM from Bacillus subtilis.</title>
        <authorList>
            <person name="Guldan H."/>
            <person name="Sterner R."/>
            <person name="Babinger P."/>
        </authorList>
    </citation>
    <scope>PUTATIVE FUNCTION</scope>
    <source>
        <strain>168</strain>
    </source>
</reference>
<reference key="4">
    <citation type="journal article" date="2011" name="Angew. Chem. Int. Ed. Engl.">
        <title>Functional assignment of an enzyme that catalyzes the synthesis of an archaea-type ether lipid in bacteria.</title>
        <authorList>
            <person name="Guldan H."/>
            <person name="Matysik F.M."/>
            <person name="Bocola M."/>
            <person name="Sterner R."/>
            <person name="Babinger P."/>
        </authorList>
    </citation>
    <scope>FUNCTION</scope>
    <scope>CATALYTIC ACTIVITY</scope>
    <scope>SUBSTRATE SPECIFICITY</scope>
    <scope>SUBUNIT</scope>
    <scope>PATHWAY</scope>
    <scope>DISRUPTION PHENOTYPE</scope>
    <source>
        <strain>168</strain>
    </source>
</reference>
<reference key="5">
    <citation type="journal article" date="2011" name="J. Am. Chem. Soc.">
        <title>Two distinct mechanisms for TIM barrel prenyltransferases in bacteria.</title>
        <authorList>
            <person name="Doud E.H."/>
            <person name="Perlstein D.L."/>
            <person name="Wolpert M."/>
            <person name="Cane D.E."/>
            <person name="Walker S."/>
        </authorList>
    </citation>
    <scope>FUNCTION AS A PRENYLTRANSFERASE</scope>
    <scope>STEREOCHEMISTRY</scope>
    <scope>SUBSTRATE SPECIFICITY</scope>
    <source>
        <strain>168 / PY79</strain>
    </source>
</reference>
<reference key="6">
    <citation type="journal article" date="2014" name="Mol. Microbiol.">
        <title>A comprehensive analysis of the geranylgeranylglyceryl phosphate synthase enzyme family identifies novel members and reveals mechanisms of substrate specificity and quaternary structure organization.</title>
        <authorList>
            <person name="Peterhoff D."/>
            <person name="Beer B."/>
            <person name="Rajendran C."/>
            <person name="Kumpula E.P."/>
            <person name="Kapetaniou E."/>
            <person name="Guldan H."/>
            <person name="Wierenga R.K."/>
            <person name="Sterner R."/>
            <person name="Babinger P."/>
        </authorList>
    </citation>
    <scope>FUNCTION</scope>
    <scope>CATALYTIC ACTIVITY</scope>
    <scope>SUBUNIT</scope>
</reference>
<reference evidence="7" key="7">
    <citation type="journal article" date="2005" name="Proteins">
        <title>Structural analysis of a set of proteins resulting from a bacterial genomics project.</title>
        <authorList>
            <person name="Badger J."/>
            <person name="Sauder J.M."/>
            <person name="Adams J.M."/>
            <person name="Antonysamy S."/>
            <person name="Bain K."/>
            <person name="Bergseid M.G."/>
            <person name="Buchanan S.G."/>
            <person name="Buchanan M.D."/>
            <person name="Batiyenko Y."/>
            <person name="Christopher J.A."/>
            <person name="Emtage S."/>
            <person name="Eroshkina A."/>
            <person name="Feil I."/>
            <person name="Furlong E.B."/>
            <person name="Gajiwala K.S."/>
            <person name="Gao X."/>
            <person name="He D."/>
            <person name="Hendle J."/>
            <person name="Huber A."/>
            <person name="Hoda K."/>
            <person name="Kearins P."/>
            <person name="Kissinger C."/>
            <person name="Laubert B."/>
            <person name="Lewis H.A."/>
            <person name="Lin J."/>
            <person name="Loomis K."/>
            <person name="Lorimer D."/>
            <person name="Louie G."/>
            <person name="Maletic M."/>
            <person name="Marsh C.D."/>
            <person name="Miller I."/>
            <person name="Molinari J."/>
            <person name="Muller-Dieckmann H.J."/>
            <person name="Newman J.M."/>
            <person name="Noland B.W."/>
            <person name="Pagarigan B."/>
            <person name="Park F."/>
            <person name="Peat T.S."/>
            <person name="Post K.W."/>
            <person name="Radojicic S."/>
            <person name="Ramos A."/>
            <person name="Romero R."/>
            <person name="Rutter M.E."/>
            <person name="Sanderson W.E."/>
            <person name="Schwinn K.D."/>
            <person name="Tresser J."/>
            <person name="Winhoven J."/>
            <person name="Wright T.A."/>
            <person name="Wu L."/>
            <person name="Xu J."/>
            <person name="Harris T.J.R."/>
        </authorList>
    </citation>
    <scope>X-RAY CRYSTALLOGRAPHY (1.85 ANGSTROMS) OF 2-228</scope>
</reference>
<reference evidence="8 9 10 11" key="8">
    <citation type="journal article" date="2013" name="ChemBioChem">
        <title>Insights into TIM-barrel prenyl transferase mechanisms: crystal structures of PcrB from Bacillus subtilis and Staphylococcus aureus.</title>
        <authorList>
            <person name="Ren F."/>
            <person name="Feng X."/>
            <person name="Ko T.P."/>
            <person name="Huang C.H."/>
            <person name="Hu Y."/>
            <person name="Chan H.C."/>
            <person name="Liu Y.L."/>
            <person name="Wang K."/>
            <person name="Chen C.C."/>
            <person name="Pang X."/>
            <person name="He M."/>
            <person name="Li Y."/>
            <person name="Oldfield E."/>
            <person name="Guo R.T."/>
        </authorList>
    </citation>
    <scope>X-RAY CRYSTALLOGRAPHY (1.54 ANGSTROMS) IN COMPLEX WITH GLYCEROL 1-PHOSPHATE</scope>
    <scope>SUBUNIT</scope>
</reference>
<dbReference type="EC" id="2.5.1.n9" evidence="1 3 5"/>
<dbReference type="EMBL" id="Y15254">
    <property type="protein sequence ID" value="CAA75551.1"/>
    <property type="molecule type" value="Genomic_DNA"/>
</dbReference>
<dbReference type="EMBL" id="AL009126">
    <property type="protein sequence ID" value="CAB12480.1"/>
    <property type="molecule type" value="Genomic_DNA"/>
</dbReference>
<dbReference type="PIR" id="D69794">
    <property type="entry name" value="D69794"/>
</dbReference>
<dbReference type="RefSeq" id="NP_388542.1">
    <property type="nucleotide sequence ID" value="NC_000964.3"/>
</dbReference>
<dbReference type="RefSeq" id="WP_003233922.1">
    <property type="nucleotide sequence ID" value="NZ_OZ025638.1"/>
</dbReference>
<dbReference type="PDB" id="1VIZ">
    <property type="method" value="X-ray"/>
    <property type="resolution" value="1.85 A"/>
    <property type="chains" value="A/B=2-228"/>
</dbReference>
<dbReference type="PDB" id="3VZX">
    <property type="method" value="X-ray"/>
    <property type="resolution" value="1.54 A"/>
    <property type="chains" value="A/B=1-228"/>
</dbReference>
<dbReference type="PDB" id="3VZY">
    <property type="method" value="X-ray"/>
    <property type="resolution" value="1.63 A"/>
    <property type="chains" value="A/B=1-228"/>
</dbReference>
<dbReference type="PDB" id="3VZZ">
    <property type="method" value="X-ray"/>
    <property type="resolution" value="2.04 A"/>
    <property type="chains" value="A/B=1-228"/>
</dbReference>
<dbReference type="PDB" id="3W00">
    <property type="method" value="X-ray"/>
    <property type="resolution" value="2.50 A"/>
    <property type="chains" value="A/B=1-228"/>
</dbReference>
<dbReference type="PDBsum" id="1VIZ"/>
<dbReference type="PDBsum" id="3VZX"/>
<dbReference type="PDBsum" id="3VZY"/>
<dbReference type="PDBsum" id="3VZZ"/>
<dbReference type="PDBsum" id="3W00"/>
<dbReference type="SMR" id="O34790"/>
<dbReference type="FunCoup" id="O34790">
    <property type="interactions" value="164"/>
</dbReference>
<dbReference type="STRING" id="224308.BSU06600"/>
<dbReference type="jPOST" id="O34790"/>
<dbReference type="PaxDb" id="224308-BSU06600"/>
<dbReference type="EnsemblBacteria" id="CAB12480">
    <property type="protein sequence ID" value="CAB12480"/>
    <property type="gene ID" value="BSU_06600"/>
</dbReference>
<dbReference type="GeneID" id="936052"/>
<dbReference type="KEGG" id="bsu:BSU06600"/>
<dbReference type="PATRIC" id="fig|224308.179.peg.718"/>
<dbReference type="eggNOG" id="COG1646">
    <property type="taxonomic scope" value="Bacteria"/>
</dbReference>
<dbReference type="InParanoid" id="O34790"/>
<dbReference type="OrthoDB" id="2381757at2"/>
<dbReference type="PhylomeDB" id="O34790"/>
<dbReference type="BioCyc" id="BSUB:BSU06600-MONOMER"/>
<dbReference type="UniPathway" id="UPA00940"/>
<dbReference type="EvolutionaryTrace" id="O34790"/>
<dbReference type="Proteomes" id="UP000001570">
    <property type="component" value="Chromosome"/>
</dbReference>
<dbReference type="GO" id="GO:0120536">
    <property type="term" value="F:heptaprenylglyceryl phosphate synthase activity"/>
    <property type="evidence" value="ECO:0000314"/>
    <property type="project" value="UniProtKB"/>
</dbReference>
<dbReference type="GO" id="GO:0000287">
    <property type="term" value="F:magnesium ion binding"/>
    <property type="evidence" value="ECO:0007669"/>
    <property type="project" value="UniProtKB-UniRule"/>
</dbReference>
<dbReference type="GO" id="GO:0046474">
    <property type="term" value="P:glycerophospholipid biosynthetic process"/>
    <property type="evidence" value="ECO:0000314"/>
    <property type="project" value="UniProtKB"/>
</dbReference>
<dbReference type="CDD" id="cd02812">
    <property type="entry name" value="PcrB_like"/>
    <property type="match status" value="1"/>
</dbReference>
<dbReference type="FunFam" id="3.20.20.390:FF:000001">
    <property type="entry name" value="Heptaprenylglyceryl phosphate synthase"/>
    <property type="match status" value="1"/>
</dbReference>
<dbReference type="Gene3D" id="3.20.20.390">
    <property type="entry name" value="FMN-linked oxidoreductases"/>
    <property type="match status" value="1"/>
</dbReference>
<dbReference type="HAMAP" id="MF_00112">
    <property type="entry name" value="GGGP_HepGP_synthase"/>
    <property type="match status" value="1"/>
</dbReference>
<dbReference type="InterPro" id="IPR039074">
    <property type="entry name" value="GGGP/HepGP_synthase_I"/>
</dbReference>
<dbReference type="InterPro" id="IPR038597">
    <property type="entry name" value="GGGP/HepGP_synthase_sf"/>
</dbReference>
<dbReference type="InterPro" id="IPR008205">
    <property type="entry name" value="GGGP_HepGP_synthase"/>
</dbReference>
<dbReference type="NCBIfam" id="TIGR01768">
    <property type="entry name" value="GGGP-family"/>
    <property type="match status" value="1"/>
</dbReference>
<dbReference type="NCBIfam" id="NF003197">
    <property type="entry name" value="PRK04169.1-1"/>
    <property type="match status" value="1"/>
</dbReference>
<dbReference type="NCBIfam" id="NF003199">
    <property type="entry name" value="PRK04169.1-3"/>
    <property type="match status" value="1"/>
</dbReference>
<dbReference type="PANTHER" id="PTHR40029">
    <property type="match status" value="1"/>
</dbReference>
<dbReference type="PANTHER" id="PTHR40029:SF2">
    <property type="entry name" value="HEPTAPRENYLGLYCERYL PHOSPHATE SYNTHASE"/>
    <property type="match status" value="1"/>
</dbReference>
<dbReference type="Pfam" id="PF01884">
    <property type="entry name" value="PcrB"/>
    <property type="match status" value="1"/>
</dbReference>
<dbReference type="SUPFAM" id="SSF51395">
    <property type="entry name" value="FMN-linked oxidoreductases"/>
    <property type="match status" value="1"/>
</dbReference>